<evidence type="ECO:0000250" key="1">
    <source>
        <dbReference type="UniProtKB" id="Q8IW52"/>
    </source>
</evidence>
<evidence type="ECO:0000255" key="2"/>
<evidence type="ECO:0000269" key="3">
    <source>
    </source>
</evidence>
<evidence type="ECO:0000305" key="4"/>
<evidence type="ECO:0000312" key="5">
    <source>
        <dbReference type="EMBL" id="BAC67207.1"/>
    </source>
</evidence>
<organism evidence="5">
    <name type="scientific">Mus musculus</name>
    <name type="common">Mouse</name>
    <dbReference type="NCBI Taxonomy" id="10090"/>
    <lineage>
        <taxon>Eukaryota</taxon>
        <taxon>Metazoa</taxon>
        <taxon>Chordata</taxon>
        <taxon>Craniata</taxon>
        <taxon>Vertebrata</taxon>
        <taxon>Euteleostomi</taxon>
        <taxon>Mammalia</taxon>
        <taxon>Eutheria</taxon>
        <taxon>Euarchontoglires</taxon>
        <taxon>Glires</taxon>
        <taxon>Rodentia</taxon>
        <taxon>Myomorpha</taxon>
        <taxon>Muroidea</taxon>
        <taxon>Muridae</taxon>
        <taxon>Murinae</taxon>
        <taxon>Mus</taxon>
        <taxon>Mus</taxon>
    </lineage>
</organism>
<dbReference type="EMBL" id="AB097573">
    <property type="protein sequence ID" value="BAC67207.1"/>
    <property type="status" value="ALT_INIT"/>
    <property type="molecule type" value="Genomic_DNA"/>
</dbReference>
<dbReference type="EMBL" id="AK032263">
    <property type="protein sequence ID" value="BAC27786.1"/>
    <property type="molecule type" value="mRNA"/>
</dbReference>
<dbReference type="EMBL" id="AK039763">
    <property type="protein sequence ID" value="BAC30442.1"/>
    <property type="molecule type" value="mRNA"/>
</dbReference>
<dbReference type="EMBL" id="AK053065">
    <property type="protein sequence ID" value="BAC35254.1"/>
    <property type="molecule type" value="mRNA"/>
</dbReference>
<dbReference type="CCDS" id="CCDS30167.1"/>
<dbReference type="RefSeq" id="NP_001352040.1">
    <property type="nucleotide sequence ID" value="NM_001365111.1"/>
</dbReference>
<dbReference type="RefSeq" id="NP_001352041.1">
    <property type="nucleotide sequence ID" value="NM_001365112.1"/>
</dbReference>
<dbReference type="RefSeq" id="NP_848855.2">
    <property type="nucleotide sequence ID" value="NM_178740.4"/>
</dbReference>
<dbReference type="RefSeq" id="XP_006528074.1">
    <property type="nucleotide sequence ID" value="XM_006528011.1"/>
</dbReference>
<dbReference type="RefSeq" id="XP_006528076.1">
    <property type="nucleotide sequence ID" value="XM_006528013.3"/>
</dbReference>
<dbReference type="RefSeq" id="XP_017173974.1">
    <property type="nucleotide sequence ID" value="XM_017318485.1"/>
</dbReference>
<dbReference type="RefSeq" id="XP_017173975.1">
    <property type="nucleotide sequence ID" value="XM_017318486.1"/>
</dbReference>
<dbReference type="RefSeq" id="XP_017173976.1">
    <property type="nucleotide sequence ID" value="XM_017318487.1"/>
</dbReference>
<dbReference type="RefSeq" id="XP_036017845.1">
    <property type="nucleotide sequence ID" value="XM_036161952.1"/>
</dbReference>
<dbReference type="SMR" id="Q810B8"/>
<dbReference type="BioGRID" id="232771">
    <property type="interactions" value="3"/>
</dbReference>
<dbReference type="FunCoup" id="Q810B8">
    <property type="interactions" value="227"/>
</dbReference>
<dbReference type="IntAct" id="Q810B8">
    <property type="interactions" value="1"/>
</dbReference>
<dbReference type="STRING" id="10090.ENSMUSP00000064443"/>
<dbReference type="GlyCosmos" id="Q810B8">
    <property type="glycosylation" value="3 sites, No reported glycans"/>
</dbReference>
<dbReference type="GlyGen" id="Q810B8">
    <property type="glycosylation" value="5 sites, 3 N-linked glycans (3 sites), 1 O-linked glycan (1 site)"/>
</dbReference>
<dbReference type="iPTMnet" id="Q810B8"/>
<dbReference type="PhosphoSitePlus" id="Q810B8"/>
<dbReference type="PaxDb" id="10090-ENSMUSP00000064443"/>
<dbReference type="ProteomicsDB" id="258692"/>
<dbReference type="Antibodypedia" id="438">
    <property type="antibodies" value="234 antibodies from 32 providers"/>
</dbReference>
<dbReference type="DNASU" id="245446"/>
<dbReference type="Ensembl" id="ENSMUST00000069926.14">
    <property type="protein sequence ID" value="ENSMUSP00000064443.8"/>
    <property type="gene ID" value="ENSMUSG00000046699.15"/>
</dbReference>
<dbReference type="Ensembl" id="ENSMUST00000114679.2">
    <property type="protein sequence ID" value="ENSMUSP00000110327.2"/>
    <property type="gene ID" value="ENSMUSG00000046699.15"/>
</dbReference>
<dbReference type="GeneID" id="245446"/>
<dbReference type="KEGG" id="mmu:245446"/>
<dbReference type="UCSC" id="uc009tio.1">
    <property type="organism name" value="mouse"/>
</dbReference>
<dbReference type="AGR" id="MGI:2442509"/>
<dbReference type="CTD" id="139065"/>
<dbReference type="MGI" id="MGI:2442509">
    <property type="gene designation" value="Slitrk4"/>
</dbReference>
<dbReference type="VEuPathDB" id="HostDB:ENSMUSG00000046699"/>
<dbReference type="eggNOG" id="ENOG502QQXQ">
    <property type="taxonomic scope" value="Eukaryota"/>
</dbReference>
<dbReference type="GeneTree" id="ENSGT00940000160971"/>
<dbReference type="HOGENOM" id="CLU_012706_1_0_1"/>
<dbReference type="InParanoid" id="Q810B8"/>
<dbReference type="OMA" id="EPSMFIH"/>
<dbReference type="OrthoDB" id="1394818at2759"/>
<dbReference type="PhylomeDB" id="Q810B8"/>
<dbReference type="TreeFam" id="TF326378"/>
<dbReference type="Reactome" id="R-MMU-388844">
    <property type="pathway name" value="Receptor-type tyrosine-protein phosphatases"/>
</dbReference>
<dbReference type="BioGRID-ORCS" id="245446">
    <property type="hits" value="3 hits in 76 CRISPR screens"/>
</dbReference>
<dbReference type="ChiTaRS" id="Slitrk4">
    <property type="organism name" value="mouse"/>
</dbReference>
<dbReference type="PRO" id="PR:Q810B8"/>
<dbReference type="Proteomes" id="UP000000589">
    <property type="component" value="Chromosome X"/>
</dbReference>
<dbReference type="RNAct" id="Q810B8">
    <property type="molecule type" value="protein"/>
</dbReference>
<dbReference type="Bgee" id="ENSMUSG00000046699">
    <property type="expression patterns" value="Expressed in lateral septal nucleus and 133 other cell types or tissues"/>
</dbReference>
<dbReference type="ExpressionAtlas" id="Q810B8">
    <property type="expression patterns" value="baseline and differential"/>
</dbReference>
<dbReference type="GO" id="GO:0098978">
    <property type="term" value="C:glutamatergic synapse"/>
    <property type="evidence" value="ECO:0007669"/>
    <property type="project" value="Ensembl"/>
</dbReference>
<dbReference type="GO" id="GO:0016020">
    <property type="term" value="C:membrane"/>
    <property type="evidence" value="ECO:0000250"/>
    <property type="project" value="MGI"/>
</dbReference>
<dbReference type="GO" id="GO:0005886">
    <property type="term" value="C:plasma membrane"/>
    <property type="evidence" value="ECO:0007669"/>
    <property type="project" value="UniProtKB-SubCell"/>
</dbReference>
<dbReference type="GO" id="GO:0007409">
    <property type="term" value="P:axonogenesis"/>
    <property type="evidence" value="ECO:0000314"/>
    <property type="project" value="MGI"/>
</dbReference>
<dbReference type="GO" id="GO:0001662">
    <property type="term" value="P:behavioral fear response"/>
    <property type="evidence" value="ECO:0000315"/>
    <property type="project" value="MGI"/>
</dbReference>
<dbReference type="GO" id="GO:0008283">
    <property type="term" value="P:cell population proliferation"/>
    <property type="evidence" value="ECO:0000315"/>
    <property type="project" value="MGI"/>
</dbReference>
<dbReference type="GO" id="GO:0060291">
    <property type="term" value="P:long-term synaptic potentiation"/>
    <property type="evidence" value="ECO:0000315"/>
    <property type="project" value="MGI"/>
</dbReference>
<dbReference type="GO" id="GO:0007613">
    <property type="term" value="P:memory"/>
    <property type="evidence" value="ECO:0000315"/>
    <property type="project" value="MGI"/>
</dbReference>
<dbReference type="GO" id="GO:0051965">
    <property type="term" value="P:positive regulation of synapse assembly"/>
    <property type="evidence" value="ECO:0000314"/>
    <property type="project" value="MGI"/>
</dbReference>
<dbReference type="GO" id="GO:0007224">
    <property type="term" value="P:smoothened signaling pathway"/>
    <property type="evidence" value="ECO:0000315"/>
    <property type="project" value="MGI"/>
</dbReference>
<dbReference type="FunFam" id="3.80.10.10:FF:000001">
    <property type="entry name" value="SLIT and NTRK-like family, member 1"/>
    <property type="match status" value="2"/>
</dbReference>
<dbReference type="Gene3D" id="3.80.10.10">
    <property type="entry name" value="Ribonuclease Inhibitor"/>
    <property type="match status" value="2"/>
</dbReference>
<dbReference type="InterPro" id="IPR000483">
    <property type="entry name" value="Cys-rich_flank_reg_C"/>
</dbReference>
<dbReference type="InterPro" id="IPR001611">
    <property type="entry name" value="Leu-rich_rpt"/>
</dbReference>
<dbReference type="InterPro" id="IPR003591">
    <property type="entry name" value="Leu-rich_rpt_typical-subtyp"/>
</dbReference>
<dbReference type="InterPro" id="IPR032675">
    <property type="entry name" value="LRR_dom_sf"/>
</dbReference>
<dbReference type="PANTHER" id="PTHR45773:SF3">
    <property type="entry name" value="SLIT AND NTRK-LIKE PROTEIN 4"/>
    <property type="match status" value="1"/>
</dbReference>
<dbReference type="PANTHER" id="PTHR45773">
    <property type="entry name" value="SLIT AND NTRK-LIKE PROTEIN 4-RELATED"/>
    <property type="match status" value="1"/>
</dbReference>
<dbReference type="Pfam" id="PF13855">
    <property type="entry name" value="LRR_8"/>
    <property type="match status" value="2"/>
</dbReference>
<dbReference type="SMART" id="SM00365">
    <property type="entry name" value="LRR_SD22"/>
    <property type="match status" value="2"/>
</dbReference>
<dbReference type="SMART" id="SM00369">
    <property type="entry name" value="LRR_TYP"/>
    <property type="match status" value="9"/>
</dbReference>
<dbReference type="SMART" id="SM00082">
    <property type="entry name" value="LRRCT"/>
    <property type="match status" value="2"/>
</dbReference>
<dbReference type="SUPFAM" id="SSF52058">
    <property type="entry name" value="L domain-like"/>
    <property type="match status" value="2"/>
</dbReference>
<dbReference type="PROSITE" id="PS51450">
    <property type="entry name" value="LRR"/>
    <property type="match status" value="12"/>
</dbReference>
<comment type="function">
    <text evidence="1 3">It is involved in synaptogenesis and promotes synapse differentiation (By similarity). Suppresses neurite outgrowth (PubMed:14550773).</text>
</comment>
<comment type="subunit">
    <text>Interacts (via LRR 1 and 2 repeats) with PTPRD (via extracellular domain).</text>
</comment>
<comment type="subcellular location">
    <subcellularLocation>
        <location evidence="1">Membrane</location>
        <topology evidence="1">Single-pass type I membrane protein</topology>
    </subcellularLocation>
    <subcellularLocation>
        <location evidence="1">Cell membrane</location>
    </subcellularLocation>
</comment>
<comment type="tissue specificity">
    <text evidence="3">In the adult, significant expression is detected only in the brain. Broadly expressed in embryonic brain with highest expression in subventricular zone, subplate, cortical plate, pyramidal cell layer of hippocampus, thalamus and hypothalamus.</text>
</comment>
<comment type="developmental stage">
    <text evidence="3">In the embryo, expressed from day 10-12 and continues through later gestational development and into adulthood.</text>
</comment>
<comment type="similarity">
    <text evidence="4">Belongs to the SLITRK family.</text>
</comment>
<comment type="sequence caution" evidence="4">
    <conflict type="erroneous initiation">
        <sequence resource="EMBL-CDS" id="BAC67207"/>
    </conflict>
</comment>
<keyword id="KW-1003">Cell membrane</keyword>
<keyword id="KW-0325">Glycoprotein</keyword>
<keyword id="KW-0433">Leucine-rich repeat</keyword>
<keyword id="KW-0472">Membrane</keyword>
<keyword id="KW-1185">Reference proteome</keyword>
<keyword id="KW-0677">Repeat</keyword>
<keyword id="KW-0732">Signal</keyword>
<keyword id="KW-0812">Transmembrane</keyword>
<keyword id="KW-1133">Transmembrane helix</keyword>
<sequence>MFLWLFLIVSALISSTNADSDISVEICNVCSCVSVENVLYVNCEKVSVYRPNQLKPPWSNFYHLNFQNNFLNILYPNTFVNFSHAVSLHLGNNKLQNIEGGAFLGLSALKQLHLNNNELKILRADTFLGIENLEYLQADYNLIKYIERGAFNKLHKLKVLILNDNLISFLPDNIFRFASLTHLDIRGNRIQKLPYIGVLEHIGRVVELQLEDNPWNCSCDLLPLKAWLENMPYNIYIGEAICETPSDLYGRLLKETNKQELCPMGTGSDFDVRILPPSQQENGFTTPNGHTTQTTLHRLVTKPPKTTNPSKISGIVAGKALSNRNLSQIVSYQTRVPPLTPCPVPCFCKTHPSDLGLSVNCQEKNIQSMSELTPKPLNAKKLHVNGNNIKDVDISDFTEFEGLDLLHLGSNQITLIKGEVFHNLTNLRRLYLNGNQIERLYPEIFSGLHNLQYLYLEYNLIKEILAGTFDSMPNLQLLYLNNNLLKSLPVYIFSGAPLARLNLRNNKFMYLPVSGVLDQLQSLTQIDLEGNPWDCTCDLVALKLWLEKLNDGIVVKELKCETPVQFANIELKSLKNEILCPKLLNKPSATFTSPAPAITFTTPLGPIRSPPGGPVPLSILILSILVVLILTVFVAFCLLVFVLRRNKKPTVKHEGLGNSECGSMQLQLRKHDHKTNKKDGLSTEAFIPQTIEQMSKSHTCGLKESETGFMFSDPPGQKVMMRNAADKDKDLLHVDTRKRLSTIDELDELFPSRDSNVFIQNFLESKKEYNSIGVSGFEIRYPEKQQDKKNKKSLIGGNHSKIVVEQRKSEYFELKAKLQSSPDYLQVLEEQTALNKI</sequence>
<protein>
    <recommendedName>
        <fullName>SLIT and NTRK-like protein 4</fullName>
    </recommendedName>
</protein>
<accession>Q810B8</accession>
<accession>Q8BL56</accession>
<accession>Q8BWB0</accession>
<accession>Q8BYG4</accession>
<accession>Q8C056</accession>
<feature type="signal peptide" evidence="2">
    <location>
        <begin position="1"/>
        <end position="18"/>
    </location>
</feature>
<feature type="chain" id="PRO_0000032680" description="SLIT and NTRK-like protein 4" evidence="2">
    <location>
        <begin position="19"/>
        <end position="837"/>
    </location>
</feature>
<feature type="topological domain" description="Extracellular" evidence="2">
    <location>
        <begin position="19"/>
        <end position="618"/>
    </location>
</feature>
<feature type="transmembrane region" description="Helical" evidence="2">
    <location>
        <begin position="619"/>
        <end position="639"/>
    </location>
</feature>
<feature type="topological domain" description="Cytoplasmic" evidence="2">
    <location>
        <begin position="640"/>
        <end position="837"/>
    </location>
</feature>
<feature type="repeat" description="LRR 1">
    <location>
        <begin position="60"/>
        <end position="81"/>
    </location>
</feature>
<feature type="repeat" description="LRR 2">
    <location>
        <begin position="84"/>
        <end position="105"/>
    </location>
</feature>
<feature type="repeat" description="LRR 3">
    <location>
        <begin position="108"/>
        <end position="129"/>
    </location>
</feature>
<feature type="repeat" description="LRR 4">
    <location>
        <begin position="132"/>
        <end position="153"/>
    </location>
</feature>
<feature type="repeat" description="LRR 5">
    <location>
        <begin position="156"/>
        <end position="177"/>
    </location>
</feature>
<feature type="repeat" description="LRR 6">
    <location>
        <begin position="179"/>
        <end position="200"/>
    </location>
</feature>
<feature type="domain" description="LRRCT 1">
    <location>
        <begin position="213"/>
        <end position="264"/>
    </location>
</feature>
<feature type="domain" description="LRRNT">
    <location>
        <begin position="333"/>
        <end position="375"/>
    </location>
</feature>
<feature type="repeat" description="LRR 7">
    <location>
        <begin position="378"/>
        <end position="399"/>
    </location>
</feature>
<feature type="repeat" description="LRR 8">
    <location>
        <begin position="402"/>
        <end position="423"/>
    </location>
</feature>
<feature type="repeat" description="LRR 9">
    <location>
        <begin position="426"/>
        <end position="447"/>
    </location>
</feature>
<feature type="repeat" description="LRR 10">
    <location>
        <begin position="450"/>
        <end position="471"/>
    </location>
</feature>
<feature type="repeat" description="LRR 11">
    <location>
        <begin position="474"/>
        <end position="495"/>
    </location>
</feature>
<feature type="repeat" description="LRR 12">
    <location>
        <begin position="497"/>
        <end position="518"/>
    </location>
</feature>
<feature type="domain" description="LRRCT 2">
    <location>
        <begin position="531"/>
        <end position="582"/>
    </location>
</feature>
<feature type="glycosylation site" description="N-linked (GlcNAc...) asparagine" evidence="2">
    <location>
        <position position="81"/>
    </location>
</feature>
<feature type="glycosylation site" description="N-linked (GlcNAc...) asparagine" evidence="2">
    <location>
        <position position="325"/>
    </location>
</feature>
<feature type="glycosylation site" description="N-linked (GlcNAc...) asparagine" evidence="2">
    <location>
        <position position="423"/>
    </location>
</feature>
<feature type="sequence conflict" description="In Ref. 2; BAC27786." evidence="4" ref="2">
    <original>R</original>
    <variation>G</variation>
    <location>
        <position position="429"/>
    </location>
</feature>
<reference evidence="4" key="1">
    <citation type="journal article" date="2003" name="Mol. Cell. Neurosci.">
        <title>Identification and characterization of Slitrk, a novel neuronal transmembrane protein family controlling neurite outgrowth.</title>
        <authorList>
            <person name="Aruga J."/>
            <person name="Mikoshiba K."/>
        </authorList>
    </citation>
    <scope>NUCLEOTIDE SEQUENCE [GENOMIC DNA]</scope>
    <scope>FUNCTION</scope>
    <scope>TISSUE SPECIFICITY</scope>
    <scope>DEVELOPMENTAL STAGE</scope>
</reference>
<reference key="2">
    <citation type="journal article" date="2005" name="Science">
        <title>The transcriptional landscape of the mammalian genome.</title>
        <authorList>
            <person name="Carninci P."/>
            <person name="Kasukawa T."/>
            <person name="Katayama S."/>
            <person name="Gough J."/>
            <person name="Frith M.C."/>
            <person name="Maeda N."/>
            <person name="Oyama R."/>
            <person name="Ravasi T."/>
            <person name="Lenhard B."/>
            <person name="Wells C."/>
            <person name="Kodzius R."/>
            <person name="Shimokawa K."/>
            <person name="Bajic V.B."/>
            <person name="Brenner S.E."/>
            <person name="Batalov S."/>
            <person name="Forrest A.R."/>
            <person name="Zavolan M."/>
            <person name="Davis M.J."/>
            <person name="Wilming L.G."/>
            <person name="Aidinis V."/>
            <person name="Allen J.E."/>
            <person name="Ambesi-Impiombato A."/>
            <person name="Apweiler R."/>
            <person name="Aturaliya R.N."/>
            <person name="Bailey T.L."/>
            <person name="Bansal M."/>
            <person name="Baxter L."/>
            <person name="Beisel K.W."/>
            <person name="Bersano T."/>
            <person name="Bono H."/>
            <person name="Chalk A.M."/>
            <person name="Chiu K.P."/>
            <person name="Choudhary V."/>
            <person name="Christoffels A."/>
            <person name="Clutterbuck D.R."/>
            <person name="Crowe M.L."/>
            <person name="Dalla E."/>
            <person name="Dalrymple B.P."/>
            <person name="de Bono B."/>
            <person name="Della Gatta G."/>
            <person name="di Bernardo D."/>
            <person name="Down T."/>
            <person name="Engstrom P."/>
            <person name="Fagiolini M."/>
            <person name="Faulkner G."/>
            <person name="Fletcher C.F."/>
            <person name="Fukushima T."/>
            <person name="Furuno M."/>
            <person name="Futaki S."/>
            <person name="Gariboldi M."/>
            <person name="Georgii-Hemming P."/>
            <person name="Gingeras T.R."/>
            <person name="Gojobori T."/>
            <person name="Green R.E."/>
            <person name="Gustincich S."/>
            <person name="Harbers M."/>
            <person name="Hayashi Y."/>
            <person name="Hensch T.K."/>
            <person name="Hirokawa N."/>
            <person name="Hill D."/>
            <person name="Huminiecki L."/>
            <person name="Iacono M."/>
            <person name="Ikeo K."/>
            <person name="Iwama A."/>
            <person name="Ishikawa T."/>
            <person name="Jakt M."/>
            <person name="Kanapin A."/>
            <person name="Katoh M."/>
            <person name="Kawasawa Y."/>
            <person name="Kelso J."/>
            <person name="Kitamura H."/>
            <person name="Kitano H."/>
            <person name="Kollias G."/>
            <person name="Krishnan S.P."/>
            <person name="Kruger A."/>
            <person name="Kummerfeld S.K."/>
            <person name="Kurochkin I.V."/>
            <person name="Lareau L.F."/>
            <person name="Lazarevic D."/>
            <person name="Lipovich L."/>
            <person name="Liu J."/>
            <person name="Liuni S."/>
            <person name="McWilliam S."/>
            <person name="Madan Babu M."/>
            <person name="Madera M."/>
            <person name="Marchionni L."/>
            <person name="Matsuda H."/>
            <person name="Matsuzawa S."/>
            <person name="Miki H."/>
            <person name="Mignone F."/>
            <person name="Miyake S."/>
            <person name="Morris K."/>
            <person name="Mottagui-Tabar S."/>
            <person name="Mulder N."/>
            <person name="Nakano N."/>
            <person name="Nakauchi H."/>
            <person name="Ng P."/>
            <person name="Nilsson R."/>
            <person name="Nishiguchi S."/>
            <person name="Nishikawa S."/>
            <person name="Nori F."/>
            <person name="Ohara O."/>
            <person name="Okazaki Y."/>
            <person name="Orlando V."/>
            <person name="Pang K.C."/>
            <person name="Pavan W.J."/>
            <person name="Pavesi G."/>
            <person name="Pesole G."/>
            <person name="Petrovsky N."/>
            <person name="Piazza S."/>
            <person name="Reed J."/>
            <person name="Reid J.F."/>
            <person name="Ring B.Z."/>
            <person name="Ringwald M."/>
            <person name="Rost B."/>
            <person name="Ruan Y."/>
            <person name="Salzberg S.L."/>
            <person name="Sandelin A."/>
            <person name="Schneider C."/>
            <person name="Schoenbach C."/>
            <person name="Sekiguchi K."/>
            <person name="Semple C.A."/>
            <person name="Seno S."/>
            <person name="Sessa L."/>
            <person name="Sheng Y."/>
            <person name="Shibata Y."/>
            <person name="Shimada H."/>
            <person name="Shimada K."/>
            <person name="Silva D."/>
            <person name="Sinclair B."/>
            <person name="Sperling S."/>
            <person name="Stupka E."/>
            <person name="Sugiura K."/>
            <person name="Sultana R."/>
            <person name="Takenaka Y."/>
            <person name="Taki K."/>
            <person name="Tammoja K."/>
            <person name="Tan S.L."/>
            <person name="Tang S."/>
            <person name="Taylor M.S."/>
            <person name="Tegner J."/>
            <person name="Teichmann S.A."/>
            <person name="Ueda H.R."/>
            <person name="van Nimwegen E."/>
            <person name="Verardo R."/>
            <person name="Wei C.L."/>
            <person name="Yagi K."/>
            <person name="Yamanishi H."/>
            <person name="Zabarovsky E."/>
            <person name="Zhu S."/>
            <person name="Zimmer A."/>
            <person name="Hide W."/>
            <person name="Bult C."/>
            <person name="Grimmond S.M."/>
            <person name="Teasdale R.D."/>
            <person name="Liu E.T."/>
            <person name="Brusic V."/>
            <person name="Quackenbush J."/>
            <person name="Wahlestedt C."/>
            <person name="Mattick J.S."/>
            <person name="Hume D.A."/>
            <person name="Kai C."/>
            <person name="Sasaki D."/>
            <person name="Tomaru Y."/>
            <person name="Fukuda S."/>
            <person name="Kanamori-Katayama M."/>
            <person name="Suzuki M."/>
            <person name="Aoki J."/>
            <person name="Arakawa T."/>
            <person name="Iida J."/>
            <person name="Imamura K."/>
            <person name="Itoh M."/>
            <person name="Kato T."/>
            <person name="Kawaji H."/>
            <person name="Kawagashira N."/>
            <person name="Kawashima T."/>
            <person name="Kojima M."/>
            <person name="Kondo S."/>
            <person name="Konno H."/>
            <person name="Nakano K."/>
            <person name="Ninomiya N."/>
            <person name="Nishio T."/>
            <person name="Okada M."/>
            <person name="Plessy C."/>
            <person name="Shibata K."/>
            <person name="Shiraki T."/>
            <person name="Suzuki S."/>
            <person name="Tagami M."/>
            <person name="Waki K."/>
            <person name="Watahiki A."/>
            <person name="Okamura-Oho Y."/>
            <person name="Suzuki H."/>
            <person name="Kawai J."/>
            <person name="Hayashizaki Y."/>
        </authorList>
    </citation>
    <scope>NUCLEOTIDE SEQUENCE [LARGE SCALE MRNA]</scope>
    <source>
        <strain>C57BL/6J</strain>
        <tissue>Embryonic head</tissue>
        <tissue>Olfactory bulb</tissue>
        <tissue>Spinal cord</tissue>
    </source>
</reference>
<reference key="3">
    <citation type="journal article" date="2010" name="Cell">
        <title>A tissue-specific atlas of mouse protein phosphorylation and expression.</title>
        <authorList>
            <person name="Huttlin E.L."/>
            <person name="Jedrychowski M.P."/>
            <person name="Elias J.E."/>
            <person name="Goswami T."/>
            <person name="Rad R."/>
            <person name="Beausoleil S.A."/>
            <person name="Villen J."/>
            <person name="Haas W."/>
            <person name="Sowa M.E."/>
            <person name="Gygi S.P."/>
        </authorList>
    </citation>
    <scope>IDENTIFICATION BY MASS SPECTROMETRY [LARGE SCALE ANALYSIS]</scope>
    <source>
        <tissue>Brain</tissue>
    </source>
</reference>
<reference key="4">
    <citation type="journal article" date="2015" name="Sci. Rep.">
        <title>Structure of Slitrk2-PTPdelta complex reveals mechanisms for splicing-dependent trans-synaptic adhesion.</title>
        <authorList>
            <person name="Yamagata A."/>
            <person name="Sato Y."/>
            <person name="Goto-Ito S."/>
            <person name="Uemura T."/>
            <person name="Maeda A."/>
            <person name="Shiroshima T."/>
            <person name="Yoshida T."/>
            <person name="Fukai S."/>
        </authorList>
    </citation>
    <scope>INTERACTION WITH PTPRD</scope>
</reference>
<proteinExistence type="evidence at protein level"/>
<gene>
    <name type="primary">Slitrk4</name>
</gene>
<name>SLIK4_MOUSE</name>